<protein>
    <recommendedName>
        <fullName>Synaptotagmin-like protein 5</fullName>
    </recommendedName>
</protein>
<organism>
    <name type="scientific">Homo sapiens</name>
    <name type="common">Human</name>
    <dbReference type="NCBI Taxonomy" id="9606"/>
    <lineage>
        <taxon>Eukaryota</taxon>
        <taxon>Metazoa</taxon>
        <taxon>Chordata</taxon>
        <taxon>Craniata</taxon>
        <taxon>Vertebrata</taxon>
        <taxon>Euteleostomi</taxon>
        <taxon>Mammalia</taxon>
        <taxon>Eutheria</taxon>
        <taxon>Euarchontoglires</taxon>
        <taxon>Primates</taxon>
        <taxon>Haplorrhini</taxon>
        <taxon>Catarrhini</taxon>
        <taxon>Hominidae</taxon>
        <taxon>Homo</taxon>
    </lineage>
</organism>
<sequence>MSKNSEFINLSFLLDHEKEMILGVLKRDEYLKKVEDKRIRKLKNELLEAKRRSGKTQQEASRVCVHCHRNLGLIFDRGDPCQACSLRVCRECRVAGPNGSWKCTVCDKIAQLRIITGEWFFEEKAKRFKQVNVLGTDVVRQSILRRSPGAEEVQSQEQTRQDAEKSDTSPVAGKKASHDGPKRKGFLLSKFRSATRGEIITPKTDTGRSYSLDLDGQHFRSLKSPPGSDRGSTGSSDLNDQEPGPRTPKSSRSNGVTPGTQSSPAPSTRTVTSVISREYGFENSMDLAAIEGTSQELTKSHRRNTSGTPSIAVSGTSLSSDQSRSELDLSESFTEDSEDTVSIRSKSVPGALDKDSLEETEESIDALVSSQLSTNTHRLASGLSTTSLNSMMSVYSETGDYGNVKVSGEILLHISYCYKTGGLYIFVKNCRNLAIGDEKKQRTDAYVKSYLLPDKSRNNKRKTKIRTGTNPEFNETLKYTISHTQLETRTLQLSVWHYDRFGRNSFLGEVEIPFDSWNFENPTDEWFVLQPKVEFAPDIGLQYKGELTVVLRYIPPEENLMLPPEQLQGNKTFKKGKKKESPVISGGILEVFIKEAKNLTAVKSGGTSDSFVKGYLLPDDSKATKHKTLVIKKSVNPQWNHTFMFSGIHPQDIKNVCLELTIWDKEAFSSNIFLGGVRLNSGSGVSHGKNVDWMDSQGEEQRLWQKMANNPGTPFEGVLMLRSSMGKCRL</sequence>
<proteinExistence type="evidence at protein level"/>
<dbReference type="EMBL" id="AB080222">
    <property type="protein sequence ID" value="BAB88906.1"/>
    <property type="molecule type" value="mRNA"/>
</dbReference>
<dbReference type="EMBL" id="AL121578">
    <property type="status" value="NOT_ANNOTATED_CDS"/>
    <property type="molecule type" value="Genomic_DNA"/>
</dbReference>
<dbReference type="EMBL" id="BC131585">
    <property type="protein sequence ID" value="AAI31586.1"/>
    <property type="molecule type" value="mRNA"/>
</dbReference>
<dbReference type="CCDS" id="CCDS14244.1">
    <molecule id="Q8TDW5-1"/>
</dbReference>
<dbReference type="CCDS" id="CCDS55399.1">
    <molecule id="Q8TDW5-2"/>
</dbReference>
<dbReference type="RefSeq" id="NP_001156806.1">
    <molecule id="Q8TDW5-2"/>
    <property type="nucleotide sequence ID" value="NM_001163334.1"/>
</dbReference>
<dbReference type="RefSeq" id="NP_001156807.1">
    <molecule id="Q8TDW5-1"/>
    <property type="nucleotide sequence ID" value="NM_001163335.2"/>
</dbReference>
<dbReference type="RefSeq" id="NP_620135.1">
    <molecule id="Q8TDW5-1"/>
    <property type="nucleotide sequence ID" value="NM_138780.3"/>
</dbReference>
<dbReference type="RefSeq" id="XP_011542303.1">
    <molecule id="Q8TDW5-2"/>
    <property type="nucleotide sequence ID" value="XM_011544001.3"/>
</dbReference>
<dbReference type="RefSeq" id="XP_011542304.1">
    <molecule id="Q8TDW5-2"/>
    <property type="nucleotide sequence ID" value="XM_011544002.3"/>
</dbReference>
<dbReference type="RefSeq" id="XP_016885461.1">
    <molecule id="Q8TDW5-2"/>
    <property type="nucleotide sequence ID" value="XM_017029972.1"/>
</dbReference>
<dbReference type="RefSeq" id="XP_016885462.1">
    <molecule id="Q8TDW5-2"/>
    <property type="nucleotide sequence ID" value="XM_017029973.2"/>
</dbReference>
<dbReference type="RefSeq" id="XP_016885463.1">
    <molecule id="Q8TDW5-2"/>
    <property type="nucleotide sequence ID" value="XM_017029974.2"/>
</dbReference>
<dbReference type="RefSeq" id="XP_047298608.1">
    <molecule id="Q8TDW5-2"/>
    <property type="nucleotide sequence ID" value="XM_047442652.1"/>
</dbReference>
<dbReference type="RefSeq" id="XP_047298610.1">
    <molecule id="Q8TDW5-1"/>
    <property type="nucleotide sequence ID" value="XM_047442654.1"/>
</dbReference>
<dbReference type="RefSeq" id="XP_047298611.1">
    <molecule id="Q8TDW5-1"/>
    <property type="nucleotide sequence ID" value="XM_047442655.1"/>
</dbReference>
<dbReference type="RefSeq" id="XP_047298612.1">
    <molecule id="Q8TDW5-1"/>
    <property type="nucleotide sequence ID" value="XM_047442656.1"/>
</dbReference>
<dbReference type="RefSeq" id="XP_047298613.1">
    <molecule id="Q8TDW5-1"/>
    <property type="nucleotide sequence ID" value="XM_047442657.1"/>
</dbReference>
<dbReference type="RefSeq" id="XP_047298614.1">
    <molecule id="Q8TDW5-1"/>
    <property type="nucleotide sequence ID" value="XM_047442658.1"/>
</dbReference>
<dbReference type="RefSeq" id="XP_047298615.1">
    <molecule id="Q8TDW5-1"/>
    <property type="nucleotide sequence ID" value="XM_047442659.1"/>
</dbReference>
<dbReference type="RefSeq" id="XP_054184118.1">
    <molecule id="Q8TDW5-2"/>
    <property type="nucleotide sequence ID" value="XM_054328143.1"/>
</dbReference>
<dbReference type="RefSeq" id="XP_054184119.1">
    <molecule id="Q8TDW5-2"/>
    <property type="nucleotide sequence ID" value="XM_054328144.1"/>
</dbReference>
<dbReference type="RefSeq" id="XP_054184120.1">
    <molecule id="Q8TDW5-2"/>
    <property type="nucleotide sequence ID" value="XM_054328145.1"/>
</dbReference>
<dbReference type="RefSeq" id="XP_054184121.1">
    <molecule id="Q8TDW5-2"/>
    <property type="nucleotide sequence ID" value="XM_054328146.1"/>
</dbReference>
<dbReference type="RefSeq" id="XP_054184122.1">
    <molecule id="Q8TDW5-2"/>
    <property type="nucleotide sequence ID" value="XM_054328147.1"/>
</dbReference>
<dbReference type="RefSeq" id="XP_054184123.1">
    <molecule id="Q8TDW5-2"/>
    <property type="nucleotide sequence ID" value="XM_054328148.1"/>
</dbReference>
<dbReference type="RefSeq" id="XP_054184125.1">
    <molecule id="Q8TDW5-1"/>
    <property type="nucleotide sequence ID" value="XM_054328150.1"/>
</dbReference>
<dbReference type="RefSeq" id="XP_054184126.1">
    <molecule id="Q8TDW5-1"/>
    <property type="nucleotide sequence ID" value="XM_054328151.1"/>
</dbReference>
<dbReference type="RefSeq" id="XP_054184127.1">
    <molecule id="Q8TDW5-1"/>
    <property type="nucleotide sequence ID" value="XM_054328152.1"/>
</dbReference>
<dbReference type="RefSeq" id="XP_054184128.1">
    <molecule id="Q8TDW5-1"/>
    <property type="nucleotide sequence ID" value="XM_054328153.1"/>
</dbReference>
<dbReference type="RefSeq" id="XP_054184129.1">
    <molecule id="Q8TDW5-1"/>
    <property type="nucleotide sequence ID" value="XM_054328154.1"/>
</dbReference>
<dbReference type="RefSeq" id="XP_054184130.1">
    <molecule id="Q8TDW5-1"/>
    <property type="nucleotide sequence ID" value="XM_054328155.1"/>
</dbReference>
<dbReference type="SMR" id="Q8TDW5"/>
<dbReference type="BioGRID" id="125121">
    <property type="interactions" value="17"/>
</dbReference>
<dbReference type="FunCoup" id="Q8TDW5">
    <property type="interactions" value="88"/>
</dbReference>
<dbReference type="IntAct" id="Q8TDW5">
    <property type="interactions" value="17"/>
</dbReference>
<dbReference type="STRING" id="9606.ENSP00000395220"/>
<dbReference type="GlyGen" id="Q8TDW5">
    <property type="glycosylation" value="3 sites, 1 N-linked glycan (1 site)"/>
</dbReference>
<dbReference type="iPTMnet" id="Q8TDW5"/>
<dbReference type="PhosphoSitePlus" id="Q8TDW5"/>
<dbReference type="BioMuta" id="SYTL5"/>
<dbReference type="DMDM" id="33301662"/>
<dbReference type="jPOST" id="Q8TDW5"/>
<dbReference type="MassIVE" id="Q8TDW5"/>
<dbReference type="PaxDb" id="9606-ENSP00000395220"/>
<dbReference type="PeptideAtlas" id="Q8TDW5"/>
<dbReference type="ProteomicsDB" id="74354">
    <molecule id="Q8TDW5-1"/>
</dbReference>
<dbReference type="ProteomicsDB" id="74355">
    <molecule id="Q8TDW5-2"/>
</dbReference>
<dbReference type="Pumba" id="Q8TDW5"/>
<dbReference type="Antibodypedia" id="10579">
    <property type="antibodies" value="91 antibodies from 23 providers"/>
</dbReference>
<dbReference type="DNASU" id="94122"/>
<dbReference type="Ensembl" id="ENST00000297875.7">
    <molecule id="Q8TDW5-1"/>
    <property type="protein sequence ID" value="ENSP00000297875.2"/>
    <property type="gene ID" value="ENSG00000147041.12"/>
</dbReference>
<dbReference type="Ensembl" id="ENST00000456733.2">
    <molecule id="Q8TDW5-2"/>
    <property type="protein sequence ID" value="ENSP00000395220.2"/>
    <property type="gene ID" value="ENSG00000147041.12"/>
</dbReference>
<dbReference type="GeneID" id="94122"/>
<dbReference type="KEGG" id="hsa:94122"/>
<dbReference type="MANE-Select" id="ENST00000297875.7">
    <property type="protein sequence ID" value="ENSP00000297875.2"/>
    <property type="RefSeq nucleotide sequence ID" value="NM_138780.3"/>
    <property type="RefSeq protein sequence ID" value="NP_620135.1"/>
</dbReference>
<dbReference type="UCSC" id="uc004ddv.4">
    <molecule id="Q8TDW5-1"/>
    <property type="organism name" value="human"/>
</dbReference>
<dbReference type="AGR" id="HGNC:15589"/>
<dbReference type="CTD" id="94122"/>
<dbReference type="DisGeNET" id="94122"/>
<dbReference type="GeneCards" id="SYTL5"/>
<dbReference type="HGNC" id="HGNC:15589">
    <property type="gene designation" value="SYTL5"/>
</dbReference>
<dbReference type="HPA" id="ENSG00000147041">
    <property type="expression patterns" value="Tissue enhanced (brain, stomach)"/>
</dbReference>
<dbReference type="MIM" id="301126">
    <property type="type" value="gene"/>
</dbReference>
<dbReference type="neXtProt" id="NX_Q8TDW5"/>
<dbReference type="OpenTargets" id="ENSG00000147041"/>
<dbReference type="PharmGKB" id="PA37988"/>
<dbReference type="VEuPathDB" id="HostDB:ENSG00000147041"/>
<dbReference type="eggNOG" id="KOG1028">
    <property type="taxonomic scope" value="Eukaryota"/>
</dbReference>
<dbReference type="GeneTree" id="ENSGT00940000158618"/>
<dbReference type="HOGENOM" id="CLU_002711_5_0_1"/>
<dbReference type="InParanoid" id="Q8TDW5"/>
<dbReference type="OMA" id="VEDKRIX"/>
<dbReference type="OrthoDB" id="195679at2759"/>
<dbReference type="PAN-GO" id="Q8TDW5">
    <property type="GO annotations" value="4 GO annotations based on evolutionary models"/>
</dbReference>
<dbReference type="PhylomeDB" id="Q8TDW5"/>
<dbReference type="TreeFam" id="TF341184"/>
<dbReference type="PathwayCommons" id="Q8TDW5"/>
<dbReference type="SignaLink" id="Q8TDW5"/>
<dbReference type="BioGRID-ORCS" id="94122">
    <property type="hits" value="9 hits in 768 CRISPR screens"/>
</dbReference>
<dbReference type="ChiTaRS" id="SYTL5">
    <property type="organism name" value="human"/>
</dbReference>
<dbReference type="GenomeRNAi" id="94122"/>
<dbReference type="Pharos" id="Q8TDW5">
    <property type="development level" value="Tbio"/>
</dbReference>
<dbReference type="PRO" id="PR:Q8TDW5"/>
<dbReference type="Proteomes" id="UP000005640">
    <property type="component" value="Chromosome X"/>
</dbReference>
<dbReference type="RNAct" id="Q8TDW5">
    <property type="molecule type" value="protein"/>
</dbReference>
<dbReference type="Bgee" id="ENSG00000147041">
    <property type="expression patterns" value="Expressed in pancreatic ductal cell and 128 other cell types or tissues"/>
</dbReference>
<dbReference type="GO" id="GO:0070382">
    <property type="term" value="C:exocytic vesicle"/>
    <property type="evidence" value="ECO:0000318"/>
    <property type="project" value="GO_Central"/>
</dbReference>
<dbReference type="GO" id="GO:0005886">
    <property type="term" value="C:plasma membrane"/>
    <property type="evidence" value="ECO:0000318"/>
    <property type="project" value="GO_Central"/>
</dbReference>
<dbReference type="GO" id="GO:0042043">
    <property type="term" value="F:neurexin family protein binding"/>
    <property type="evidence" value="ECO:0000318"/>
    <property type="project" value="GO_Central"/>
</dbReference>
<dbReference type="GO" id="GO:0005543">
    <property type="term" value="F:phospholipid binding"/>
    <property type="evidence" value="ECO:0007669"/>
    <property type="project" value="InterPro"/>
</dbReference>
<dbReference type="GO" id="GO:0031267">
    <property type="term" value="F:small GTPase binding"/>
    <property type="evidence" value="ECO:0007669"/>
    <property type="project" value="InterPro"/>
</dbReference>
<dbReference type="GO" id="GO:0008270">
    <property type="term" value="F:zinc ion binding"/>
    <property type="evidence" value="ECO:0007669"/>
    <property type="project" value="UniProtKB-KW"/>
</dbReference>
<dbReference type="GO" id="GO:0006887">
    <property type="term" value="P:exocytosis"/>
    <property type="evidence" value="ECO:0000318"/>
    <property type="project" value="GO_Central"/>
</dbReference>
<dbReference type="GO" id="GO:0006886">
    <property type="term" value="P:intracellular protein transport"/>
    <property type="evidence" value="ECO:0007669"/>
    <property type="project" value="InterPro"/>
</dbReference>
<dbReference type="CDD" id="cd04029">
    <property type="entry name" value="C2A_SLP-4_5"/>
    <property type="match status" value="1"/>
</dbReference>
<dbReference type="CDD" id="cd04020">
    <property type="entry name" value="C2B_SLP_1-2-3-4"/>
    <property type="match status" value="1"/>
</dbReference>
<dbReference type="CDD" id="cd15766">
    <property type="entry name" value="FYVE_Slp5"/>
    <property type="match status" value="1"/>
</dbReference>
<dbReference type="FunFam" id="2.60.40.150:FF:000006">
    <property type="entry name" value="Synaptotagmin-like 5, isoform CRA_a"/>
    <property type="match status" value="1"/>
</dbReference>
<dbReference type="FunFam" id="2.60.40.150:FF:000107">
    <property type="entry name" value="Synaptotagmin-like 5, isoform CRA_a"/>
    <property type="match status" value="1"/>
</dbReference>
<dbReference type="FunFam" id="3.30.40.10:FF:000018">
    <property type="entry name" value="Synaptotagmin-like 5, isoform CRA_a"/>
    <property type="match status" value="1"/>
</dbReference>
<dbReference type="Gene3D" id="2.60.40.150">
    <property type="entry name" value="C2 domain"/>
    <property type="match status" value="2"/>
</dbReference>
<dbReference type="Gene3D" id="3.30.40.10">
    <property type="entry name" value="Zinc/RING finger domain, C3HC4 (zinc finger)"/>
    <property type="match status" value="1"/>
</dbReference>
<dbReference type="InterPro" id="IPR000008">
    <property type="entry name" value="C2_dom"/>
</dbReference>
<dbReference type="InterPro" id="IPR035892">
    <property type="entry name" value="C2_domain_sf"/>
</dbReference>
<dbReference type="InterPro" id="IPR041282">
    <property type="entry name" value="FYVE_2"/>
</dbReference>
<dbReference type="InterPro" id="IPR010911">
    <property type="entry name" value="Rab_BD"/>
</dbReference>
<dbReference type="InterPro" id="IPR037303">
    <property type="entry name" value="SLP-4/5_C2A"/>
</dbReference>
<dbReference type="InterPro" id="IPR043567">
    <property type="entry name" value="SYTL1-5_C2B"/>
</dbReference>
<dbReference type="InterPro" id="IPR042783">
    <property type="entry name" value="SYTL5_FYVE"/>
</dbReference>
<dbReference type="InterPro" id="IPR011011">
    <property type="entry name" value="Znf_FYVE_PHD"/>
</dbReference>
<dbReference type="InterPro" id="IPR013083">
    <property type="entry name" value="Znf_RING/FYVE/PHD"/>
</dbReference>
<dbReference type="PANTHER" id="PTHR45716">
    <property type="entry name" value="BITESIZE, ISOFORM I"/>
    <property type="match status" value="1"/>
</dbReference>
<dbReference type="PANTHER" id="PTHR45716:SF6">
    <property type="entry name" value="SYNAPTOTAGMIN-LIKE PROTEIN 5"/>
    <property type="match status" value="1"/>
</dbReference>
<dbReference type="Pfam" id="PF00168">
    <property type="entry name" value="C2"/>
    <property type="match status" value="2"/>
</dbReference>
<dbReference type="Pfam" id="PF02318">
    <property type="entry name" value="FYVE_2"/>
    <property type="match status" value="1"/>
</dbReference>
<dbReference type="SMART" id="SM00239">
    <property type="entry name" value="C2"/>
    <property type="match status" value="2"/>
</dbReference>
<dbReference type="SUPFAM" id="SSF49562">
    <property type="entry name" value="C2 domain (Calcium/lipid-binding domain, CaLB)"/>
    <property type="match status" value="2"/>
</dbReference>
<dbReference type="SUPFAM" id="SSF57903">
    <property type="entry name" value="FYVE/PHD zinc finger"/>
    <property type="match status" value="1"/>
</dbReference>
<dbReference type="PROSITE" id="PS50004">
    <property type="entry name" value="C2"/>
    <property type="match status" value="2"/>
</dbReference>
<dbReference type="PROSITE" id="PS50916">
    <property type="entry name" value="RABBD"/>
    <property type="match status" value="1"/>
</dbReference>
<reference key="1">
    <citation type="journal article" date="2002" name="Biochem. Biophys. Res. Commun.">
        <title>Synaptotagmin-like protein 5: a novel Rab27A effector with C-terminal tandem C2 domains.</title>
        <authorList>
            <person name="Kuroda T.S."/>
            <person name="Fukuda M."/>
            <person name="Ariga H."/>
            <person name="Mikoshiba K."/>
        </authorList>
    </citation>
    <scope>NUCLEOTIDE SEQUENCE [MRNA] (ISOFORM 1)</scope>
    <scope>INTERACTION WITH RAB27A</scope>
    <scope>INTERACTION WITH PHOSPHOLIPIDS</scope>
    <source>
        <tissue>Placenta</tissue>
    </source>
</reference>
<reference key="2">
    <citation type="journal article" date="2005" name="Nature">
        <title>The DNA sequence of the human X chromosome.</title>
        <authorList>
            <person name="Ross M.T."/>
            <person name="Grafham D.V."/>
            <person name="Coffey A.J."/>
            <person name="Scherer S."/>
            <person name="McLay K."/>
            <person name="Muzny D."/>
            <person name="Platzer M."/>
            <person name="Howell G.R."/>
            <person name="Burrows C."/>
            <person name="Bird C.P."/>
            <person name="Frankish A."/>
            <person name="Lovell F.L."/>
            <person name="Howe K.L."/>
            <person name="Ashurst J.L."/>
            <person name="Fulton R.S."/>
            <person name="Sudbrak R."/>
            <person name="Wen G."/>
            <person name="Jones M.C."/>
            <person name="Hurles M.E."/>
            <person name="Andrews T.D."/>
            <person name="Scott C.E."/>
            <person name="Searle S."/>
            <person name="Ramser J."/>
            <person name="Whittaker A."/>
            <person name="Deadman R."/>
            <person name="Carter N.P."/>
            <person name="Hunt S.E."/>
            <person name="Chen R."/>
            <person name="Cree A."/>
            <person name="Gunaratne P."/>
            <person name="Havlak P."/>
            <person name="Hodgson A."/>
            <person name="Metzker M.L."/>
            <person name="Richards S."/>
            <person name="Scott G."/>
            <person name="Steffen D."/>
            <person name="Sodergren E."/>
            <person name="Wheeler D.A."/>
            <person name="Worley K.C."/>
            <person name="Ainscough R."/>
            <person name="Ambrose K.D."/>
            <person name="Ansari-Lari M.A."/>
            <person name="Aradhya S."/>
            <person name="Ashwell R.I."/>
            <person name="Babbage A.K."/>
            <person name="Bagguley C.L."/>
            <person name="Ballabio A."/>
            <person name="Banerjee R."/>
            <person name="Barker G.E."/>
            <person name="Barlow K.F."/>
            <person name="Barrett I.P."/>
            <person name="Bates K.N."/>
            <person name="Beare D.M."/>
            <person name="Beasley H."/>
            <person name="Beasley O."/>
            <person name="Beck A."/>
            <person name="Bethel G."/>
            <person name="Blechschmidt K."/>
            <person name="Brady N."/>
            <person name="Bray-Allen S."/>
            <person name="Bridgeman A.M."/>
            <person name="Brown A.J."/>
            <person name="Brown M.J."/>
            <person name="Bonnin D."/>
            <person name="Bruford E.A."/>
            <person name="Buhay C."/>
            <person name="Burch P."/>
            <person name="Burford D."/>
            <person name="Burgess J."/>
            <person name="Burrill W."/>
            <person name="Burton J."/>
            <person name="Bye J.M."/>
            <person name="Carder C."/>
            <person name="Carrel L."/>
            <person name="Chako J."/>
            <person name="Chapman J.C."/>
            <person name="Chavez D."/>
            <person name="Chen E."/>
            <person name="Chen G."/>
            <person name="Chen Y."/>
            <person name="Chen Z."/>
            <person name="Chinault C."/>
            <person name="Ciccodicola A."/>
            <person name="Clark S.Y."/>
            <person name="Clarke G."/>
            <person name="Clee C.M."/>
            <person name="Clegg S."/>
            <person name="Clerc-Blankenburg K."/>
            <person name="Clifford K."/>
            <person name="Cobley V."/>
            <person name="Cole C.G."/>
            <person name="Conquer J.S."/>
            <person name="Corby N."/>
            <person name="Connor R.E."/>
            <person name="David R."/>
            <person name="Davies J."/>
            <person name="Davis C."/>
            <person name="Davis J."/>
            <person name="Delgado O."/>
            <person name="Deshazo D."/>
            <person name="Dhami P."/>
            <person name="Ding Y."/>
            <person name="Dinh H."/>
            <person name="Dodsworth S."/>
            <person name="Draper H."/>
            <person name="Dugan-Rocha S."/>
            <person name="Dunham A."/>
            <person name="Dunn M."/>
            <person name="Durbin K.J."/>
            <person name="Dutta I."/>
            <person name="Eades T."/>
            <person name="Ellwood M."/>
            <person name="Emery-Cohen A."/>
            <person name="Errington H."/>
            <person name="Evans K.L."/>
            <person name="Faulkner L."/>
            <person name="Francis F."/>
            <person name="Frankland J."/>
            <person name="Fraser A.E."/>
            <person name="Galgoczy P."/>
            <person name="Gilbert J."/>
            <person name="Gill R."/>
            <person name="Gloeckner G."/>
            <person name="Gregory S.G."/>
            <person name="Gribble S."/>
            <person name="Griffiths C."/>
            <person name="Grocock R."/>
            <person name="Gu Y."/>
            <person name="Gwilliam R."/>
            <person name="Hamilton C."/>
            <person name="Hart E.A."/>
            <person name="Hawes A."/>
            <person name="Heath P.D."/>
            <person name="Heitmann K."/>
            <person name="Hennig S."/>
            <person name="Hernandez J."/>
            <person name="Hinzmann B."/>
            <person name="Ho S."/>
            <person name="Hoffs M."/>
            <person name="Howden P.J."/>
            <person name="Huckle E.J."/>
            <person name="Hume J."/>
            <person name="Hunt P.J."/>
            <person name="Hunt A.R."/>
            <person name="Isherwood J."/>
            <person name="Jacob L."/>
            <person name="Johnson D."/>
            <person name="Jones S."/>
            <person name="de Jong P.J."/>
            <person name="Joseph S.S."/>
            <person name="Keenan S."/>
            <person name="Kelly S."/>
            <person name="Kershaw J.K."/>
            <person name="Khan Z."/>
            <person name="Kioschis P."/>
            <person name="Klages S."/>
            <person name="Knights A.J."/>
            <person name="Kosiura A."/>
            <person name="Kovar-Smith C."/>
            <person name="Laird G.K."/>
            <person name="Langford C."/>
            <person name="Lawlor S."/>
            <person name="Leversha M."/>
            <person name="Lewis L."/>
            <person name="Liu W."/>
            <person name="Lloyd C."/>
            <person name="Lloyd D.M."/>
            <person name="Loulseged H."/>
            <person name="Loveland J.E."/>
            <person name="Lovell J.D."/>
            <person name="Lozado R."/>
            <person name="Lu J."/>
            <person name="Lyne R."/>
            <person name="Ma J."/>
            <person name="Maheshwari M."/>
            <person name="Matthews L.H."/>
            <person name="McDowall J."/>
            <person name="McLaren S."/>
            <person name="McMurray A."/>
            <person name="Meidl P."/>
            <person name="Meitinger T."/>
            <person name="Milne S."/>
            <person name="Miner G."/>
            <person name="Mistry S.L."/>
            <person name="Morgan M."/>
            <person name="Morris S."/>
            <person name="Mueller I."/>
            <person name="Mullikin J.C."/>
            <person name="Nguyen N."/>
            <person name="Nordsiek G."/>
            <person name="Nyakatura G."/>
            <person name="O'dell C.N."/>
            <person name="Okwuonu G."/>
            <person name="Palmer S."/>
            <person name="Pandian R."/>
            <person name="Parker D."/>
            <person name="Parrish J."/>
            <person name="Pasternak S."/>
            <person name="Patel D."/>
            <person name="Pearce A.V."/>
            <person name="Pearson D.M."/>
            <person name="Pelan S.E."/>
            <person name="Perez L."/>
            <person name="Porter K.M."/>
            <person name="Ramsey Y."/>
            <person name="Reichwald K."/>
            <person name="Rhodes S."/>
            <person name="Ridler K.A."/>
            <person name="Schlessinger D."/>
            <person name="Schueler M.G."/>
            <person name="Sehra H.K."/>
            <person name="Shaw-Smith C."/>
            <person name="Shen H."/>
            <person name="Sheridan E.M."/>
            <person name="Shownkeen R."/>
            <person name="Skuce C.D."/>
            <person name="Smith M.L."/>
            <person name="Sotheran E.C."/>
            <person name="Steingruber H.E."/>
            <person name="Steward C.A."/>
            <person name="Storey R."/>
            <person name="Swann R.M."/>
            <person name="Swarbreck D."/>
            <person name="Tabor P.E."/>
            <person name="Taudien S."/>
            <person name="Taylor T."/>
            <person name="Teague B."/>
            <person name="Thomas K."/>
            <person name="Thorpe A."/>
            <person name="Timms K."/>
            <person name="Tracey A."/>
            <person name="Trevanion S."/>
            <person name="Tromans A.C."/>
            <person name="d'Urso M."/>
            <person name="Verduzco D."/>
            <person name="Villasana D."/>
            <person name="Waldron L."/>
            <person name="Wall M."/>
            <person name="Wang Q."/>
            <person name="Warren J."/>
            <person name="Warry G.L."/>
            <person name="Wei X."/>
            <person name="West A."/>
            <person name="Whitehead S.L."/>
            <person name="Whiteley M.N."/>
            <person name="Wilkinson J.E."/>
            <person name="Willey D.L."/>
            <person name="Williams G."/>
            <person name="Williams L."/>
            <person name="Williamson A."/>
            <person name="Williamson H."/>
            <person name="Wilming L."/>
            <person name="Woodmansey R.L."/>
            <person name="Wray P.W."/>
            <person name="Yen J."/>
            <person name="Zhang J."/>
            <person name="Zhou J."/>
            <person name="Zoghbi H."/>
            <person name="Zorilla S."/>
            <person name="Buck D."/>
            <person name="Reinhardt R."/>
            <person name="Poustka A."/>
            <person name="Rosenthal A."/>
            <person name="Lehrach H."/>
            <person name="Meindl A."/>
            <person name="Minx P.J."/>
            <person name="Hillier L.W."/>
            <person name="Willard H.F."/>
            <person name="Wilson R.K."/>
            <person name="Waterston R.H."/>
            <person name="Rice C.M."/>
            <person name="Vaudin M."/>
            <person name="Coulson A."/>
            <person name="Nelson D.L."/>
            <person name="Weinstock G."/>
            <person name="Sulston J.E."/>
            <person name="Durbin R.M."/>
            <person name="Hubbard T."/>
            <person name="Gibbs R.A."/>
            <person name="Beck S."/>
            <person name="Rogers J."/>
            <person name="Bentley D.R."/>
        </authorList>
    </citation>
    <scope>NUCLEOTIDE SEQUENCE [LARGE SCALE GENOMIC DNA]</scope>
</reference>
<reference key="3">
    <citation type="journal article" date="2004" name="Genome Res.">
        <title>The status, quality, and expansion of the NIH full-length cDNA project: the Mammalian Gene Collection (MGC).</title>
        <authorList>
            <consortium name="The MGC Project Team"/>
        </authorList>
    </citation>
    <scope>NUCLEOTIDE SEQUENCE [LARGE SCALE MRNA] (ISOFORM 2)</scope>
</reference>
<comment type="function">
    <text>May act as Rab effector protein and play a role in vesicle trafficking. Binds phospholipids.</text>
</comment>
<comment type="subunit">
    <text>Binds RAB27A that has been activated by GTP-binding, and possibly also RAB3A and RAB6A.</text>
</comment>
<comment type="interaction">
    <interactant intactId="EBI-2939487">
        <id>Q8TDW5</id>
    </interactant>
    <interactant intactId="EBI-739624">
        <id>Q8NHQ1</id>
        <label>CEP70</label>
    </interactant>
    <organismsDiffer>false</organismsDiffer>
    <experiments>4</experiments>
</comment>
<comment type="interaction">
    <interactant intactId="EBI-2939487">
        <id>Q8TDW5</id>
    </interactant>
    <interactant intactId="EBI-10179046">
        <id>O00194</id>
        <label>RAB27B</label>
    </interactant>
    <organismsDiffer>false</organismsDiffer>
    <experiments>7</experiments>
</comment>
<comment type="interaction">
    <interactant intactId="EBI-2939487">
        <id>Q8TDW5</id>
    </interactant>
    <interactant intactId="EBI-749118">
        <id>Q9BTA9</id>
        <label>WAC</label>
    </interactant>
    <organismsDiffer>false</organismsDiffer>
    <experiments>3</experiments>
</comment>
<comment type="interaction">
    <interactant intactId="EBI-2939487">
        <id>Q8TDW5</id>
    </interactant>
    <interactant intactId="EBI-398172">
        <id>Q9ERI2</id>
        <label>Rab27a</label>
    </interactant>
    <organismsDiffer>true</organismsDiffer>
    <experiments>2</experiments>
</comment>
<comment type="interaction">
    <interactant intactId="EBI-2939487">
        <id>Q8TDW5</id>
    </interactant>
    <interactant intactId="EBI-398393">
        <id>P63011</id>
        <label>Rab3a</label>
    </interactant>
    <organismsDiffer>true</organismsDiffer>
    <experiments>2</experiments>
</comment>
<comment type="interaction">
    <interactant intactId="EBI-2939487">
        <id>Q8TDW5</id>
    </interactant>
    <interactant intactId="EBI-444674">
        <id>P35279</id>
        <label>Rab6a</label>
    </interactant>
    <organismsDiffer>true</organismsDiffer>
    <experiments>2</experiments>
</comment>
<comment type="interaction">
    <interactant intactId="EBI-12243980">
        <id>Q8TDW5-2</id>
    </interactant>
    <interactant intactId="EBI-946046">
        <id>P54252</id>
        <label>ATXN3</label>
    </interactant>
    <organismsDiffer>false</organismsDiffer>
    <experiments>3</experiments>
</comment>
<comment type="interaction">
    <interactant intactId="EBI-12243980">
        <id>Q8TDW5-2</id>
    </interactant>
    <interactant intactId="EBI-7257229">
        <id>Q96PX6</id>
        <label>CCDC85A</label>
    </interactant>
    <organismsDiffer>false</organismsDiffer>
    <experiments>3</experiments>
</comment>
<comment type="interaction">
    <interactant intactId="EBI-12243980">
        <id>Q8TDW5-2</id>
    </interactant>
    <interactant intactId="EBI-739624">
        <id>Q8NHQ1</id>
        <label>CEP70</label>
    </interactant>
    <organismsDiffer>false</organismsDiffer>
    <experiments>3</experiments>
</comment>
<comment type="interaction">
    <interactant intactId="EBI-12243980">
        <id>Q8TDW5-2</id>
    </interactant>
    <interactant intactId="EBI-716881">
        <id>P51159</id>
        <label>RAB27A</label>
    </interactant>
    <organismsDiffer>false</organismsDiffer>
    <experiments>3</experiments>
</comment>
<comment type="interaction">
    <interactant intactId="EBI-12243980">
        <id>Q8TDW5-2</id>
    </interactant>
    <interactant intactId="EBI-10179046">
        <id>O00194</id>
        <label>RAB27B</label>
    </interactant>
    <organismsDiffer>false</organismsDiffer>
    <experiments>3</experiments>
</comment>
<comment type="interaction">
    <interactant intactId="EBI-12243980">
        <id>Q8TDW5-2</id>
    </interactant>
    <interactant intactId="EBI-720609">
        <id>O76024</id>
        <label>WFS1</label>
    </interactant>
    <organismsDiffer>false</organismsDiffer>
    <experiments>3</experiments>
</comment>
<comment type="interaction">
    <interactant intactId="EBI-12243980">
        <id>Q8TDW5-2</id>
    </interactant>
    <interactant intactId="EBI-2799703">
        <id>O95070</id>
        <label>YIF1A</label>
    </interactant>
    <organismsDiffer>false</organismsDiffer>
    <experiments>3</experiments>
</comment>
<comment type="subcellular location">
    <subcellularLocation>
        <location evidence="1">Membrane</location>
        <topology evidence="1">Peripheral membrane protein</topology>
    </subcellularLocation>
</comment>
<comment type="alternative products">
    <event type="alternative splicing"/>
    <isoform>
        <id>Q8TDW5-1</id>
        <name>1</name>
        <sequence type="displayed"/>
    </isoform>
    <isoform>
        <id>Q8TDW5-2</id>
        <name>2</name>
        <sequence type="described" ref="VSP_042659"/>
    </isoform>
</comment>
<comment type="tissue specificity">
    <text>Highly expressed in placenta and liver.</text>
</comment>
<accession>Q8TDW5</accession>
<accession>A2RRF2</accession>
<keyword id="KW-0025">Alternative splicing</keyword>
<keyword id="KW-0472">Membrane</keyword>
<keyword id="KW-0479">Metal-binding</keyword>
<keyword id="KW-0597">Phosphoprotein</keyword>
<keyword id="KW-1267">Proteomics identification</keyword>
<keyword id="KW-1185">Reference proteome</keyword>
<keyword id="KW-0677">Repeat</keyword>
<keyword id="KW-0862">Zinc</keyword>
<keyword id="KW-0863">Zinc-finger</keyword>
<feature type="chain" id="PRO_0000190219" description="Synaptotagmin-like protein 5">
    <location>
        <begin position="1"/>
        <end position="730"/>
    </location>
</feature>
<feature type="domain" description="RabBD" evidence="4">
    <location>
        <begin position="7"/>
        <end position="123"/>
    </location>
</feature>
<feature type="domain" description="C2 1" evidence="3">
    <location>
        <begin position="406"/>
        <end position="527"/>
    </location>
</feature>
<feature type="domain" description="C2 2" evidence="3">
    <location>
        <begin position="563"/>
        <end position="694"/>
    </location>
</feature>
<feature type="zinc finger region" description="FYVE-type">
    <location>
        <begin position="64"/>
        <end position="106"/>
    </location>
</feature>
<feature type="region of interest" description="Disordered" evidence="5">
    <location>
        <begin position="147"/>
        <end position="188"/>
    </location>
</feature>
<feature type="region of interest" description="Disordered" evidence="5">
    <location>
        <begin position="217"/>
        <end position="271"/>
    </location>
</feature>
<feature type="region of interest" description="Disordered" evidence="5">
    <location>
        <begin position="294"/>
        <end position="355"/>
    </location>
</feature>
<feature type="compositionally biased region" description="Polar residues" evidence="5">
    <location>
        <begin position="248"/>
        <end position="271"/>
    </location>
</feature>
<feature type="compositionally biased region" description="Polar residues" evidence="5">
    <location>
        <begin position="305"/>
        <end position="322"/>
    </location>
</feature>
<feature type="modified residue" description="Phosphoserine" evidence="2">
    <location>
        <position position="147"/>
    </location>
</feature>
<feature type="splice variant" id="VSP_042659" description="In isoform 2." evidence="6">
    <original>S</original>
    <variation>STSSQAGSDRKWTYLNVPDADSD</variation>
    <location>
        <position position="384"/>
    </location>
</feature>
<feature type="sequence variant" id="VAR_024601" description="In dbSNP:rs4827331.">
    <original>I</original>
    <variation>V</variation>
    <location>
        <position position="275"/>
    </location>
</feature>
<feature type="sequence variant" id="VAR_061753" description="In dbSNP:rs57226394.">
    <original>R</original>
    <variation>C</variation>
    <location>
        <position position="302"/>
    </location>
</feature>
<evidence type="ECO:0000250" key="1"/>
<evidence type="ECO:0000250" key="2">
    <source>
        <dbReference type="UniProtKB" id="Q80T23"/>
    </source>
</evidence>
<evidence type="ECO:0000255" key="3">
    <source>
        <dbReference type="PROSITE-ProRule" id="PRU00041"/>
    </source>
</evidence>
<evidence type="ECO:0000255" key="4">
    <source>
        <dbReference type="PROSITE-ProRule" id="PRU00234"/>
    </source>
</evidence>
<evidence type="ECO:0000256" key="5">
    <source>
        <dbReference type="SAM" id="MobiDB-lite"/>
    </source>
</evidence>
<evidence type="ECO:0000303" key="6">
    <source>
    </source>
</evidence>
<name>SYTL5_HUMAN</name>
<gene>
    <name type="primary">SYTL5</name>
    <name type="synonym">SLP5</name>
</gene>